<proteinExistence type="evidence at protein level"/>
<organism>
    <name type="scientific">Acanthamoeba polyphaga mimivirus</name>
    <name type="common">APMV</name>
    <dbReference type="NCBI Taxonomy" id="212035"/>
    <lineage>
        <taxon>Viruses</taxon>
        <taxon>Varidnaviria</taxon>
        <taxon>Bamfordvirae</taxon>
        <taxon>Nucleocytoviricota</taxon>
        <taxon>Megaviricetes</taxon>
        <taxon>Imitervirales</taxon>
        <taxon>Mimiviridae</taxon>
        <taxon>Megamimivirinae</taxon>
        <taxon>Mimivirus</taxon>
        <taxon>Mimivirus bradfordmassiliense</taxon>
    </lineage>
</organism>
<gene>
    <name type="ordered locus">MIMI_R489</name>
</gene>
<organismHost>
    <name type="scientific">Acanthamoeba polyphaga</name>
    <name type="common">Amoeba</name>
    <dbReference type="NCBI Taxonomy" id="5757"/>
</organismHost>
<protein>
    <recommendedName>
        <fullName>Uncharacterized protein R489</fullName>
    </recommendedName>
</protein>
<name>YR489_MIMIV</name>
<accession>Q5UQF7</accession>
<reference key="1">
    <citation type="journal article" date="2004" name="Science">
        <title>The 1.2-megabase genome sequence of Mimivirus.</title>
        <authorList>
            <person name="Raoult D."/>
            <person name="Audic S."/>
            <person name="Robert C."/>
            <person name="Abergel C."/>
            <person name="Renesto P."/>
            <person name="Ogata H."/>
            <person name="La Scola B."/>
            <person name="Susan M."/>
            <person name="Claverie J.-M."/>
        </authorList>
    </citation>
    <scope>NUCLEOTIDE SEQUENCE [LARGE SCALE GENOMIC DNA]</scope>
    <source>
        <strain>Rowbotham-Bradford</strain>
    </source>
</reference>
<reference key="2">
    <citation type="journal article" date="2006" name="J. Virol.">
        <title>Mimivirus giant particles incorporate a large fraction of anonymous and unique gene products.</title>
        <authorList>
            <person name="Renesto P."/>
            <person name="Abergel C."/>
            <person name="Decloquement P."/>
            <person name="Moinier D."/>
            <person name="Azza S."/>
            <person name="Ogata H."/>
            <person name="Fourquet P."/>
            <person name="Gorvel J.-P."/>
            <person name="Claverie J.-M."/>
            <person name="Raoult D."/>
        </authorList>
    </citation>
    <scope>IDENTIFICATION BY MASS SPECTROMETRY [LARGE SCALE ANALYSIS]</scope>
    <scope>SUBCELLULAR LOCATION</scope>
</reference>
<evidence type="ECO:0000255" key="1"/>
<evidence type="ECO:0000269" key="2">
    <source>
    </source>
</evidence>
<dbReference type="EMBL" id="AY653733">
    <property type="protein sequence ID" value="AAV50755.1"/>
    <property type="molecule type" value="Genomic_DNA"/>
</dbReference>
<dbReference type="SMR" id="Q5UQF7"/>
<dbReference type="KEGG" id="vg:9925118"/>
<dbReference type="OrthoDB" id="20276at10239"/>
<dbReference type="Proteomes" id="UP000001134">
    <property type="component" value="Genome"/>
</dbReference>
<dbReference type="GO" id="GO:0044423">
    <property type="term" value="C:virion component"/>
    <property type="evidence" value="ECO:0007669"/>
    <property type="project" value="UniProtKB-KW"/>
</dbReference>
<dbReference type="InterPro" id="IPR055730">
    <property type="entry name" value="P11_C"/>
</dbReference>
<dbReference type="Pfam" id="PF23983">
    <property type="entry name" value="P11_C"/>
    <property type="match status" value="1"/>
</dbReference>
<sequence>MAKFNNNILLIILIIVILFIIFYFLNKNNQSNTNNNYPVSHFSSNVSRTLPVNTNVTVPTVNDCDELSENIVESLLSKYDSSMMSDRSPFHNLVQQKQQTLRSYDGPYDNDESDDRDFTYKKNKFTRRTPNDLNDLFDVNKMLPQETEEDWFDDLHMKNAKHINNTHMIHPKKHRGLDTIGSTHKNATHDLRGDIPNPKMSVSPWGNSTIEPDVFARGLCG</sequence>
<keyword id="KW-1185">Reference proteome</keyword>
<keyword id="KW-0732">Signal</keyword>
<keyword id="KW-0946">Virion</keyword>
<comment type="subcellular location">
    <subcellularLocation>
        <location evidence="2">Virion</location>
    </subcellularLocation>
</comment>
<feature type="signal peptide" evidence="1">
    <location>
        <begin position="1"/>
        <end position="30"/>
    </location>
</feature>
<feature type="chain" id="PRO_0000244046" description="Uncharacterized protein R489">
    <location>
        <begin position="31"/>
        <end position="221"/>
    </location>
</feature>